<evidence type="ECO:0000255" key="1">
    <source>
        <dbReference type="HAMAP-Rule" id="MF_01371"/>
    </source>
</evidence>
<evidence type="ECO:0000305" key="2"/>
<comment type="subunit">
    <text evidence="1">Part of the 50S ribosomal subunit.</text>
</comment>
<comment type="similarity">
    <text evidence="1">Belongs to the universal ribosomal protein uL30 family.</text>
</comment>
<name>RL30_ECOSM</name>
<proteinExistence type="inferred from homology"/>
<keyword id="KW-0687">Ribonucleoprotein</keyword>
<keyword id="KW-0689">Ribosomal protein</keyword>
<protein>
    <recommendedName>
        <fullName evidence="1">Large ribosomal subunit protein uL30</fullName>
    </recommendedName>
    <alternativeName>
        <fullName evidence="2">50S ribosomal protein L30</fullName>
    </alternativeName>
</protein>
<gene>
    <name evidence="1" type="primary">rpmD</name>
    <name type="ordered locus">EcSMS35_3597</name>
</gene>
<feature type="chain" id="PRO_1000144682" description="Large ribosomal subunit protein uL30">
    <location>
        <begin position="1"/>
        <end position="59"/>
    </location>
</feature>
<sequence length="59" mass="6542">MAKTIKITQTRSAIGRLPKHKATLLGLGLRRIGHTVEREDTPAIRGMINAVSFMVKVEE</sequence>
<dbReference type="EMBL" id="CP000970">
    <property type="protein sequence ID" value="ACB19811.1"/>
    <property type="molecule type" value="Genomic_DNA"/>
</dbReference>
<dbReference type="RefSeq" id="WP_001140433.1">
    <property type="nucleotide sequence ID" value="NC_010498.1"/>
</dbReference>
<dbReference type="SMR" id="B1LHB6"/>
<dbReference type="GeneID" id="93778685"/>
<dbReference type="KEGG" id="ecm:EcSMS35_3597"/>
<dbReference type="HOGENOM" id="CLU_131047_1_4_6"/>
<dbReference type="Proteomes" id="UP000007011">
    <property type="component" value="Chromosome"/>
</dbReference>
<dbReference type="GO" id="GO:0022625">
    <property type="term" value="C:cytosolic large ribosomal subunit"/>
    <property type="evidence" value="ECO:0007669"/>
    <property type="project" value="TreeGrafter"/>
</dbReference>
<dbReference type="GO" id="GO:0003735">
    <property type="term" value="F:structural constituent of ribosome"/>
    <property type="evidence" value="ECO:0007669"/>
    <property type="project" value="InterPro"/>
</dbReference>
<dbReference type="GO" id="GO:0006412">
    <property type="term" value="P:translation"/>
    <property type="evidence" value="ECO:0007669"/>
    <property type="project" value="UniProtKB-UniRule"/>
</dbReference>
<dbReference type="CDD" id="cd01658">
    <property type="entry name" value="Ribosomal_L30"/>
    <property type="match status" value="1"/>
</dbReference>
<dbReference type="FunFam" id="3.30.1390.20:FF:000001">
    <property type="entry name" value="50S ribosomal protein L30"/>
    <property type="match status" value="1"/>
</dbReference>
<dbReference type="Gene3D" id="3.30.1390.20">
    <property type="entry name" value="Ribosomal protein L30, ferredoxin-like fold domain"/>
    <property type="match status" value="1"/>
</dbReference>
<dbReference type="HAMAP" id="MF_01371_B">
    <property type="entry name" value="Ribosomal_uL30_B"/>
    <property type="match status" value="1"/>
</dbReference>
<dbReference type="InterPro" id="IPR036919">
    <property type="entry name" value="Ribo_uL30_ferredoxin-like_sf"/>
</dbReference>
<dbReference type="InterPro" id="IPR005996">
    <property type="entry name" value="Ribosomal_uL30_bac-type"/>
</dbReference>
<dbReference type="InterPro" id="IPR018038">
    <property type="entry name" value="Ribosomal_uL30_CS"/>
</dbReference>
<dbReference type="InterPro" id="IPR016082">
    <property type="entry name" value="Ribosomal_uL30_ferredoxin-like"/>
</dbReference>
<dbReference type="NCBIfam" id="TIGR01308">
    <property type="entry name" value="rpmD_bact"/>
    <property type="match status" value="1"/>
</dbReference>
<dbReference type="PANTHER" id="PTHR15892:SF2">
    <property type="entry name" value="LARGE RIBOSOMAL SUBUNIT PROTEIN UL30M"/>
    <property type="match status" value="1"/>
</dbReference>
<dbReference type="PANTHER" id="PTHR15892">
    <property type="entry name" value="MITOCHONDRIAL RIBOSOMAL PROTEIN L30"/>
    <property type="match status" value="1"/>
</dbReference>
<dbReference type="Pfam" id="PF00327">
    <property type="entry name" value="Ribosomal_L30"/>
    <property type="match status" value="1"/>
</dbReference>
<dbReference type="PIRSF" id="PIRSF002211">
    <property type="entry name" value="Ribosomal_L30_bac-type"/>
    <property type="match status" value="1"/>
</dbReference>
<dbReference type="SUPFAM" id="SSF55129">
    <property type="entry name" value="Ribosomal protein L30p/L7e"/>
    <property type="match status" value="1"/>
</dbReference>
<dbReference type="PROSITE" id="PS00634">
    <property type="entry name" value="RIBOSOMAL_L30"/>
    <property type="match status" value="1"/>
</dbReference>
<organism>
    <name type="scientific">Escherichia coli (strain SMS-3-5 / SECEC)</name>
    <dbReference type="NCBI Taxonomy" id="439855"/>
    <lineage>
        <taxon>Bacteria</taxon>
        <taxon>Pseudomonadati</taxon>
        <taxon>Pseudomonadota</taxon>
        <taxon>Gammaproteobacteria</taxon>
        <taxon>Enterobacterales</taxon>
        <taxon>Enterobacteriaceae</taxon>
        <taxon>Escherichia</taxon>
    </lineage>
</organism>
<reference key="1">
    <citation type="journal article" date="2008" name="J. Bacteriol.">
        <title>Insights into the environmental resistance gene pool from the genome sequence of the multidrug-resistant environmental isolate Escherichia coli SMS-3-5.</title>
        <authorList>
            <person name="Fricke W.F."/>
            <person name="Wright M.S."/>
            <person name="Lindell A.H."/>
            <person name="Harkins D.M."/>
            <person name="Baker-Austin C."/>
            <person name="Ravel J."/>
            <person name="Stepanauskas R."/>
        </authorList>
    </citation>
    <scope>NUCLEOTIDE SEQUENCE [LARGE SCALE GENOMIC DNA]</scope>
    <source>
        <strain>SMS-3-5 / SECEC</strain>
    </source>
</reference>
<accession>B1LHB6</accession>